<comment type="subcellular location">
    <subcellularLocation>
        <location evidence="6">Secreted</location>
    </subcellularLocation>
</comment>
<comment type="alternative products">
    <event type="alternative splicing"/>
    <isoform>
        <id>Q9Y334-1</id>
        <name>1</name>
        <sequence type="displayed"/>
    </isoform>
    <isoform>
        <id>Q9Y334-2</id>
        <name>2</name>
        <sequence type="described" ref="VSP_026494 VSP_026495"/>
    </isoform>
</comment>
<comment type="tissue specificity">
    <text evidence="3">Expressed at low level in different cell lines.</text>
</comment>
<comment type="miscellaneous">
    <text>Found in the major hispocompatibility complex class III region. May be implicated in susceptibility to lung tumors.</text>
</comment>
<comment type="sequence caution" evidence="6">
    <conflict type="frameshift">
        <sequence resource="EMBL-CDS" id="CAB52192"/>
    </conflict>
</comment>
<feature type="signal peptide" evidence="1">
    <location>
        <begin position="1"/>
        <end position="28"/>
    </location>
</feature>
<feature type="chain" id="PRO_0000231631" description="von Willebrand factor A domain-containing protein 7">
    <location>
        <begin position="29"/>
        <end position="891"/>
    </location>
</feature>
<feature type="domain" description="VWFA">
    <location>
        <begin position="313"/>
        <end position="506"/>
    </location>
</feature>
<feature type="region of interest" description="Disordered" evidence="2">
    <location>
        <begin position="237"/>
        <end position="272"/>
    </location>
</feature>
<feature type="glycosylation site" description="N-linked (GlcNAc...) asparagine" evidence="1">
    <location>
        <position position="55"/>
    </location>
</feature>
<feature type="splice variant" id="VSP_026494" description="In isoform 2." evidence="5">
    <original>DRHTTPTGSSDPILTTATPAFSPFTLV</original>
    <variation>VRNHYFPSQGPAHHPYRLI</variation>
    <location>
        <begin position="834"/>
        <end position="860"/>
    </location>
</feature>
<feature type="splice variant" id="VSP_026495" description="In isoform 2." evidence="5">
    <location>
        <begin position="861"/>
        <end position="891"/>
    </location>
</feature>
<feature type="sequence variant" id="VAR_056884" description="In dbSNP:rs17207531.">
    <original>R</original>
    <variation>H</variation>
    <location>
        <position position="139"/>
    </location>
</feature>
<feature type="sequence variant" id="VAR_056885" description="In dbSNP:rs11966331.">
    <original>R</original>
    <variation>Q</variation>
    <location>
        <position position="488"/>
    </location>
</feature>
<feature type="sequence variant" id="VAR_056886" description="In dbSNP:rs28400004.">
    <original>R</original>
    <variation>Q</variation>
    <location>
        <position position="680"/>
    </location>
</feature>
<feature type="sequence variant" id="VAR_056887" description="In dbSNP:rs28400002.">
    <original>G</original>
    <variation>V</variation>
    <location>
        <position position="704"/>
    </location>
</feature>
<feature type="sequence variant" id="VAR_056888" description="In dbSNP:rs28400001.">
    <original>R</original>
    <variation>C</variation>
    <location>
        <position position="711"/>
    </location>
</feature>
<feature type="sequence variant" id="VAR_060378" description="In dbSNP:rs3101017." evidence="4">
    <original>T</original>
    <variation>A</variation>
    <location>
        <position position="861"/>
    </location>
</feature>
<feature type="sequence conflict" description="In Ref. 1; AAD21820." evidence="6" ref="1">
    <original>H</original>
    <variation>Y</variation>
    <location sequence="Q9Y334-2">
        <position position="837"/>
    </location>
</feature>
<accession>Q9Y334</accession>
<accession>A2BEX8</accession>
<accession>A6NHR6</accession>
<accession>B0V041</accession>
<accession>Q5SSR5</accession>
<accession>Q96QC8</accession>
<accession>Q9UMP9</accession>
<sequence>MLPTEVPQSHPGPSALLLLQLLLPPTSAFFPNIWSLLAAPGSITHQDLTEEAALNVTLQLFLEQPPPGRPPLRLEDFLGRTLLADDLFAAYFGPGSSRRFRAALGEVSRANAAQDFLPTSRNDPDLHFDAERLGQGRARLVGALRETVVAARALDHTLARQRLGAALHALQDFYSHSNWVELGEQQPHPHLLWPRQELQNLAQVADPTCSDCEELSCPRNWLGFTLLTSGYFGTHPPKPPGKCSHGGHFDRSSSQPPRGGINKDSTSPGFSPHHMLHLQAAKLALLASIQAFSLLRSRLGDRDFSRLLDITPASSLSFVLDTTGSMGEEINAAKIQARHLVEQRRGSPMEPVHYVLVPFHDPGFGPVFTTSDPDSFWQQLNEIHALGGGDEPEMCLSALQLALLHTPPLSDIFVFTDASPKDAFLTNQVESLTQERRCRVTFLVTEDTSRVQGRARREILSPLRFEPYKAVALASGGEVIFTKDQHIRDVAAIVGESMAALVTLPLDPPVVVPGQPLVFSVDGLLQKITVRIHGDISSFWIKNPAGVSQGQEEGGGPLGHTRRFGQFWMVTMDDPPQTGTWEIQVTAEDTPGVRVQAQTSLDFLFHFGIPMEDGPHPGLYPLTQPVAGLQTQLLVEVTGLGSRANPGDPQPHFSHVILRGVPEGAELGQVPLEPVGPPERGLLAASLSPTLLSTPRPFSLELIGQDAAGRRLHRAAPQPSTVVPVLLELSGPSGFLAPGSKVPLSLRIASFSGPQDLDLRTFVNPSFSLTSNLSRAHLELNESAWGRLWLEVPDSAAPDSVVMVTVTAGGREANPVPPTHAFLRLLVSAPAPQDRHTTPTGSSDPILTTATPAFSPFTLVTQGRAGAGLAAGSPWWGTVGGVLLLLGLASW</sequence>
<protein>
    <recommendedName>
        <fullName>von Willebrand factor A domain-containing protein 7</fullName>
    </recommendedName>
    <alternativeName>
        <fullName>Protein G7c</fullName>
    </alternativeName>
</protein>
<reference key="1">
    <citation type="journal article" date="2003" name="Genome Res.">
        <title>Analysis of the gene-dense major histocompatibility complex class III region and its comparison to mouse.</title>
        <authorList>
            <person name="Xie T."/>
            <person name="Rowen L."/>
            <person name="Aguado B."/>
            <person name="Ahearn M.E."/>
            <person name="Madan A."/>
            <person name="Qin S."/>
            <person name="Campbell R.D."/>
            <person name="Hood L."/>
        </authorList>
    </citation>
    <scope>NUCLEOTIDE SEQUENCE [LARGE SCALE GENOMIC DNA]</scope>
    <scope>VARIANT ALA-861</scope>
</reference>
<reference key="2">
    <citation type="submission" date="2001-08" db="EMBL/GenBank/DDBJ databases">
        <title>Homo sapiens 2,229,817bp genomic DNA of 6p21.3 HLA class I region.</title>
        <authorList>
            <person name="Shiina S."/>
            <person name="Tamiya G."/>
            <person name="Oka A."/>
            <person name="Inoko H."/>
        </authorList>
    </citation>
    <scope>NUCLEOTIDE SEQUENCE [LARGE SCALE GENOMIC DNA]</scope>
</reference>
<reference key="3">
    <citation type="journal article" date="2003" name="Nature">
        <title>The DNA sequence and analysis of human chromosome 6.</title>
        <authorList>
            <person name="Mungall A.J."/>
            <person name="Palmer S.A."/>
            <person name="Sims S.K."/>
            <person name="Edwards C.A."/>
            <person name="Ashurst J.L."/>
            <person name="Wilming L."/>
            <person name="Jones M.C."/>
            <person name="Horton R."/>
            <person name="Hunt S.E."/>
            <person name="Scott C.E."/>
            <person name="Gilbert J.G.R."/>
            <person name="Clamp M.E."/>
            <person name="Bethel G."/>
            <person name="Milne S."/>
            <person name="Ainscough R."/>
            <person name="Almeida J.P."/>
            <person name="Ambrose K.D."/>
            <person name="Andrews T.D."/>
            <person name="Ashwell R.I.S."/>
            <person name="Babbage A.K."/>
            <person name="Bagguley C.L."/>
            <person name="Bailey J."/>
            <person name="Banerjee R."/>
            <person name="Barker D.J."/>
            <person name="Barlow K.F."/>
            <person name="Bates K."/>
            <person name="Beare D.M."/>
            <person name="Beasley H."/>
            <person name="Beasley O."/>
            <person name="Bird C.P."/>
            <person name="Blakey S.E."/>
            <person name="Bray-Allen S."/>
            <person name="Brook J."/>
            <person name="Brown A.J."/>
            <person name="Brown J.Y."/>
            <person name="Burford D.C."/>
            <person name="Burrill W."/>
            <person name="Burton J."/>
            <person name="Carder C."/>
            <person name="Carter N.P."/>
            <person name="Chapman J.C."/>
            <person name="Clark S.Y."/>
            <person name="Clark G."/>
            <person name="Clee C.M."/>
            <person name="Clegg S."/>
            <person name="Cobley V."/>
            <person name="Collier R.E."/>
            <person name="Collins J.E."/>
            <person name="Colman L.K."/>
            <person name="Corby N.R."/>
            <person name="Coville G.J."/>
            <person name="Culley K.M."/>
            <person name="Dhami P."/>
            <person name="Davies J."/>
            <person name="Dunn M."/>
            <person name="Earthrowl M.E."/>
            <person name="Ellington A.E."/>
            <person name="Evans K.A."/>
            <person name="Faulkner L."/>
            <person name="Francis M.D."/>
            <person name="Frankish A."/>
            <person name="Frankland J."/>
            <person name="French L."/>
            <person name="Garner P."/>
            <person name="Garnett J."/>
            <person name="Ghori M.J."/>
            <person name="Gilby L.M."/>
            <person name="Gillson C.J."/>
            <person name="Glithero R.J."/>
            <person name="Grafham D.V."/>
            <person name="Grant M."/>
            <person name="Gribble S."/>
            <person name="Griffiths C."/>
            <person name="Griffiths M.N.D."/>
            <person name="Hall R."/>
            <person name="Halls K.S."/>
            <person name="Hammond S."/>
            <person name="Harley J.L."/>
            <person name="Hart E.A."/>
            <person name="Heath P.D."/>
            <person name="Heathcott R."/>
            <person name="Holmes S.J."/>
            <person name="Howden P.J."/>
            <person name="Howe K.L."/>
            <person name="Howell G.R."/>
            <person name="Huckle E."/>
            <person name="Humphray S.J."/>
            <person name="Humphries M.D."/>
            <person name="Hunt A.R."/>
            <person name="Johnson C.M."/>
            <person name="Joy A.A."/>
            <person name="Kay M."/>
            <person name="Keenan S.J."/>
            <person name="Kimberley A.M."/>
            <person name="King A."/>
            <person name="Laird G.K."/>
            <person name="Langford C."/>
            <person name="Lawlor S."/>
            <person name="Leongamornlert D.A."/>
            <person name="Leversha M."/>
            <person name="Lloyd C.R."/>
            <person name="Lloyd D.M."/>
            <person name="Loveland J.E."/>
            <person name="Lovell J."/>
            <person name="Martin S."/>
            <person name="Mashreghi-Mohammadi M."/>
            <person name="Maslen G.L."/>
            <person name="Matthews L."/>
            <person name="McCann O.T."/>
            <person name="McLaren S.J."/>
            <person name="McLay K."/>
            <person name="McMurray A."/>
            <person name="Moore M.J.F."/>
            <person name="Mullikin J.C."/>
            <person name="Niblett D."/>
            <person name="Nickerson T."/>
            <person name="Novik K.L."/>
            <person name="Oliver K."/>
            <person name="Overton-Larty E.K."/>
            <person name="Parker A."/>
            <person name="Patel R."/>
            <person name="Pearce A.V."/>
            <person name="Peck A.I."/>
            <person name="Phillimore B.J.C.T."/>
            <person name="Phillips S."/>
            <person name="Plumb R.W."/>
            <person name="Porter K.M."/>
            <person name="Ramsey Y."/>
            <person name="Ranby S.A."/>
            <person name="Rice C.M."/>
            <person name="Ross M.T."/>
            <person name="Searle S.M."/>
            <person name="Sehra H.K."/>
            <person name="Sheridan E."/>
            <person name="Skuce C.D."/>
            <person name="Smith S."/>
            <person name="Smith M."/>
            <person name="Spraggon L."/>
            <person name="Squares S.L."/>
            <person name="Steward C.A."/>
            <person name="Sycamore N."/>
            <person name="Tamlyn-Hall G."/>
            <person name="Tester J."/>
            <person name="Theaker A.J."/>
            <person name="Thomas D.W."/>
            <person name="Thorpe A."/>
            <person name="Tracey A."/>
            <person name="Tromans A."/>
            <person name="Tubby B."/>
            <person name="Wall M."/>
            <person name="Wallis J.M."/>
            <person name="West A.P."/>
            <person name="White S.S."/>
            <person name="Whitehead S.L."/>
            <person name="Whittaker H."/>
            <person name="Wild A."/>
            <person name="Willey D.J."/>
            <person name="Wilmer T.E."/>
            <person name="Wood J.M."/>
            <person name="Wray P.W."/>
            <person name="Wyatt J.C."/>
            <person name="Young L."/>
            <person name="Younger R.M."/>
            <person name="Bentley D.R."/>
            <person name="Coulson A."/>
            <person name="Durbin R.M."/>
            <person name="Hubbard T."/>
            <person name="Sulston J.E."/>
            <person name="Dunham I."/>
            <person name="Rogers J."/>
            <person name="Beck S."/>
        </authorList>
    </citation>
    <scope>NUCLEOTIDE SEQUENCE [LARGE SCALE GENOMIC DNA]</scope>
</reference>
<reference key="4">
    <citation type="journal article" date="2000" name="Immunogenetics">
        <title>G7c, a novel gene in the mouse and human major histocompatibility complex class III region, possibly controlling lung tumor susceptibility.</title>
        <authorList>
            <person name="Snoek M."/>
            <person name="Albertella M.R."/>
            <person name="van Kooij M."/>
            <person name="Wixon J."/>
            <person name="van Vugt H."/>
            <person name="de Groot K."/>
            <person name="Campbell R.D."/>
        </authorList>
    </citation>
    <scope>NUCLEOTIDE SEQUENCE [MRNA] OF 299-837 (ISOFORM 2)</scope>
    <scope>TISSUE SPECIFICITY</scope>
</reference>
<keyword id="KW-0025">Alternative splicing</keyword>
<keyword id="KW-0325">Glycoprotein</keyword>
<keyword id="KW-1267">Proteomics identification</keyword>
<keyword id="KW-1185">Reference proteome</keyword>
<keyword id="KW-0964">Secreted</keyword>
<keyword id="KW-0732">Signal</keyword>
<dbReference type="EMBL" id="AF134726">
    <property type="protein sequence ID" value="AAD21820.1"/>
    <property type="molecule type" value="Genomic_DNA"/>
</dbReference>
<dbReference type="EMBL" id="BA000025">
    <property type="protein sequence ID" value="BAB63304.1"/>
    <property type="molecule type" value="Genomic_DNA"/>
</dbReference>
<dbReference type="EMBL" id="AL662834">
    <property type="status" value="NOT_ANNOTATED_CDS"/>
    <property type="molecule type" value="Genomic_DNA"/>
</dbReference>
<dbReference type="EMBL" id="AL662899">
    <property type="status" value="NOT_ANNOTATED_CDS"/>
    <property type="molecule type" value="Genomic_DNA"/>
</dbReference>
<dbReference type="EMBL" id="BX248133">
    <property type="status" value="NOT_ANNOTATED_CDS"/>
    <property type="molecule type" value="Genomic_DNA"/>
</dbReference>
<dbReference type="EMBL" id="CR759787">
    <property type="status" value="NOT_ANNOTATED_CDS"/>
    <property type="molecule type" value="Genomic_DNA"/>
</dbReference>
<dbReference type="EMBL" id="CR759915">
    <property type="status" value="NOT_ANNOTATED_CDS"/>
    <property type="molecule type" value="Genomic_DNA"/>
</dbReference>
<dbReference type="EMBL" id="CR925765">
    <property type="status" value="NOT_ANNOTATED_CDS"/>
    <property type="molecule type" value="Genomic_DNA"/>
</dbReference>
<dbReference type="EMBL" id="AJ245418">
    <property type="protein sequence ID" value="CAB52192.1"/>
    <property type="status" value="ALT_FRAME"/>
    <property type="molecule type" value="mRNA"/>
</dbReference>
<dbReference type="CCDS" id="CCDS4721.2">
    <molecule id="Q9Y334-1"/>
</dbReference>
<dbReference type="RefSeq" id="NP_079534.2">
    <molecule id="Q9Y334-1"/>
    <property type="nucleotide sequence ID" value="NM_025258.3"/>
</dbReference>
<dbReference type="SMR" id="Q9Y334"/>
<dbReference type="BioGRID" id="123282">
    <property type="interactions" value="4"/>
</dbReference>
<dbReference type="FunCoup" id="Q9Y334">
    <property type="interactions" value="20"/>
</dbReference>
<dbReference type="IntAct" id="Q9Y334">
    <property type="interactions" value="2"/>
</dbReference>
<dbReference type="STRING" id="9606.ENSP00000364840"/>
<dbReference type="GlyCosmos" id="Q9Y334">
    <property type="glycosylation" value="1 site, No reported glycans"/>
</dbReference>
<dbReference type="GlyGen" id="Q9Y334">
    <property type="glycosylation" value="2 sites, 1 N-linked glycan (1 site)"/>
</dbReference>
<dbReference type="iPTMnet" id="Q9Y334"/>
<dbReference type="PhosphoSitePlus" id="Q9Y334"/>
<dbReference type="BioMuta" id="VWA7"/>
<dbReference type="DMDM" id="294862535"/>
<dbReference type="MassIVE" id="Q9Y334"/>
<dbReference type="PaxDb" id="9606-ENSP00000364840"/>
<dbReference type="PeptideAtlas" id="Q9Y334"/>
<dbReference type="ProteomicsDB" id="85968">
    <molecule id="Q9Y334-1"/>
</dbReference>
<dbReference type="ProteomicsDB" id="85969">
    <molecule id="Q9Y334-2"/>
</dbReference>
<dbReference type="Antibodypedia" id="56596">
    <property type="antibodies" value="15 antibodies from 5 providers"/>
</dbReference>
<dbReference type="DNASU" id="80737"/>
<dbReference type="Ensembl" id="ENST00000375688.5">
    <molecule id="Q9Y334-1"/>
    <property type="protein sequence ID" value="ENSP00000364840.4"/>
    <property type="gene ID" value="ENSG00000204396.11"/>
</dbReference>
<dbReference type="Ensembl" id="ENST00000430726.2">
    <molecule id="Q9Y334-1"/>
    <property type="protein sequence ID" value="ENSP00000411910.2"/>
    <property type="gene ID" value="ENSG00000234433.8"/>
</dbReference>
<dbReference type="Ensembl" id="ENST00000438415.2">
    <molecule id="Q9Y334-1"/>
    <property type="protein sequence ID" value="ENSP00000390732.2"/>
    <property type="gene ID" value="ENSG00000230048.8"/>
</dbReference>
<dbReference type="Ensembl" id="ENST00000438725.2">
    <molecule id="Q9Y334-1"/>
    <property type="protein sequence ID" value="ENSP00000413704.2"/>
    <property type="gene ID" value="ENSG00000223757.8"/>
</dbReference>
<dbReference type="Ensembl" id="ENST00000452329.2">
    <molecule id="Q9Y334-1"/>
    <property type="protein sequence ID" value="ENSP00000406943.2"/>
    <property type="gene ID" value="ENSG00000238203.8"/>
</dbReference>
<dbReference type="GeneID" id="80737"/>
<dbReference type="KEGG" id="hsa:80737"/>
<dbReference type="MANE-Select" id="ENST00000375688.5">
    <property type="protein sequence ID" value="ENSP00000364840.4"/>
    <property type="RefSeq nucleotide sequence ID" value="NM_025258.3"/>
    <property type="RefSeq protein sequence ID" value="NP_079534.2"/>
</dbReference>
<dbReference type="UCSC" id="uc011dog.3">
    <molecule id="Q9Y334-1"/>
    <property type="organism name" value="human"/>
</dbReference>
<dbReference type="AGR" id="HGNC:13939"/>
<dbReference type="CTD" id="80737"/>
<dbReference type="DisGeNET" id="80737"/>
<dbReference type="GeneCards" id="VWA7"/>
<dbReference type="HGNC" id="HGNC:13939">
    <property type="gene designation" value="VWA7"/>
</dbReference>
<dbReference type="HPA" id="ENSG00000204396">
    <property type="expression patterns" value="Tissue enhanced (pituitary)"/>
</dbReference>
<dbReference type="MIM" id="609693">
    <property type="type" value="gene"/>
</dbReference>
<dbReference type="neXtProt" id="NX_Q9Y334"/>
<dbReference type="OpenTargets" id="ENSG00000204396"/>
<dbReference type="PharmGKB" id="PA25928"/>
<dbReference type="VEuPathDB" id="HostDB:ENSG00000204396"/>
<dbReference type="eggNOG" id="KOG4475">
    <property type="taxonomic scope" value="Eukaryota"/>
</dbReference>
<dbReference type="GeneTree" id="ENSGT00390000011517"/>
<dbReference type="HOGENOM" id="CLU_013884_0_0_1"/>
<dbReference type="InParanoid" id="Q9Y334"/>
<dbReference type="OMA" id="MEPIHYV"/>
<dbReference type="OrthoDB" id="301415at2759"/>
<dbReference type="PAN-GO" id="Q9Y334">
    <property type="GO annotations" value="0 GO annotations based on evolutionary models"/>
</dbReference>
<dbReference type="PhylomeDB" id="Q9Y334"/>
<dbReference type="TreeFam" id="TF329905"/>
<dbReference type="PathwayCommons" id="Q9Y334"/>
<dbReference type="SignaLink" id="Q9Y334"/>
<dbReference type="BioGRID-ORCS" id="80737">
    <property type="hits" value="19 hits in 1139 CRISPR screens"/>
</dbReference>
<dbReference type="ChiTaRS" id="VWA7">
    <property type="organism name" value="human"/>
</dbReference>
<dbReference type="GenomeRNAi" id="80737"/>
<dbReference type="Pharos" id="Q9Y334">
    <property type="development level" value="Tdark"/>
</dbReference>
<dbReference type="PRO" id="PR:Q9Y334"/>
<dbReference type="Proteomes" id="UP000005640">
    <property type="component" value="Chromosome 6"/>
</dbReference>
<dbReference type="RNAct" id="Q9Y334">
    <property type="molecule type" value="protein"/>
</dbReference>
<dbReference type="Bgee" id="ENSG00000204396">
    <property type="expression patterns" value="Expressed in right uterine tube and 93 other cell types or tissues"/>
</dbReference>
<dbReference type="ExpressionAtlas" id="Q9Y334">
    <property type="expression patterns" value="baseline and differential"/>
</dbReference>
<dbReference type="GO" id="GO:0005576">
    <property type="term" value="C:extracellular region"/>
    <property type="evidence" value="ECO:0007669"/>
    <property type="project" value="UniProtKB-SubCell"/>
</dbReference>
<dbReference type="Gene3D" id="3.40.50.410">
    <property type="entry name" value="von Willebrand factor, type A domain"/>
    <property type="match status" value="1"/>
</dbReference>
<dbReference type="InterPro" id="IPR056475">
    <property type="entry name" value="GBD_Hemicentin/VWA7"/>
</dbReference>
<dbReference type="InterPro" id="IPR056861">
    <property type="entry name" value="HMCN1-like_VWA"/>
</dbReference>
<dbReference type="InterPro" id="IPR052577">
    <property type="entry name" value="VWA7"/>
</dbReference>
<dbReference type="InterPro" id="IPR056862">
    <property type="entry name" value="VWA7_N"/>
</dbReference>
<dbReference type="InterPro" id="IPR036465">
    <property type="entry name" value="vWFA_dom_sf"/>
</dbReference>
<dbReference type="PANTHER" id="PTHR14905">
    <property type="entry name" value="NG37"/>
    <property type="match status" value="1"/>
</dbReference>
<dbReference type="PANTHER" id="PTHR14905:SF7">
    <property type="entry name" value="VON WILLEBRAND FACTOR A DOMAIN-CONTAINING PROTEIN 7"/>
    <property type="match status" value="1"/>
</dbReference>
<dbReference type="Pfam" id="PF23560">
    <property type="entry name" value="GBD_Hemicentin"/>
    <property type="match status" value="1"/>
</dbReference>
<dbReference type="Pfam" id="PF23619">
    <property type="entry name" value="Ig_VWA7"/>
    <property type="match status" value="1"/>
</dbReference>
<dbReference type="Pfam" id="PF23610">
    <property type="entry name" value="VWA7_4"/>
    <property type="match status" value="1"/>
</dbReference>
<dbReference type="Pfam" id="PF25107">
    <property type="entry name" value="VWA7_N"/>
    <property type="match status" value="1"/>
</dbReference>
<dbReference type="Pfam" id="PF25106">
    <property type="entry name" value="VWA_4"/>
    <property type="match status" value="1"/>
</dbReference>
<dbReference type="SUPFAM" id="SSF53300">
    <property type="entry name" value="vWA-like"/>
    <property type="match status" value="1"/>
</dbReference>
<evidence type="ECO:0000255" key="1"/>
<evidence type="ECO:0000256" key="2">
    <source>
        <dbReference type="SAM" id="MobiDB-lite"/>
    </source>
</evidence>
<evidence type="ECO:0000269" key="3">
    <source>
    </source>
</evidence>
<evidence type="ECO:0000269" key="4">
    <source>
    </source>
</evidence>
<evidence type="ECO:0000303" key="5">
    <source>
    </source>
</evidence>
<evidence type="ECO:0000305" key="6"/>
<proteinExistence type="evidence at protein level"/>
<organism>
    <name type="scientific">Homo sapiens</name>
    <name type="common">Human</name>
    <dbReference type="NCBI Taxonomy" id="9606"/>
    <lineage>
        <taxon>Eukaryota</taxon>
        <taxon>Metazoa</taxon>
        <taxon>Chordata</taxon>
        <taxon>Craniata</taxon>
        <taxon>Vertebrata</taxon>
        <taxon>Euteleostomi</taxon>
        <taxon>Mammalia</taxon>
        <taxon>Eutheria</taxon>
        <taxon>Euarchontoglires</taxon>
        <taxon>Primates</taxon>
        <taxon>Haplorrhini</taxon>
        <taxon>Catarrhini</taxon>
        <taxon>Hominidae</taxon>
        <taxon>Homo</taxon>
    </lineage>
</organism>
<name>VWA7_HUMAN</name>
<gene>
    <name type="primary">VWA7</name>
    <name type="synonym">C6orf27</name>
    <name type="synonym">G7C</name>
    <name type="synonym">NG37</name>
</gene>